<evidence type="ECO:0000255" key="1">
    <source>
        <dbReference type="HAMAP-Rule" id="MF_01310"/>
    </source>
</evidence>
<evidence type="ECO:0000305" key="2"/>
<keyword id="KW-1185">Reference proteome</keyword>
<keyword id="KW-0687">Ribonucleoprotein</keyword>
<keyword id="KW-0689">Ribosomal protein</keyword>
<keyword id="KW-0694">RNA-binding</keyword>
<keyword id="KW-0699">rRNA-binding</keyword>
<feature type="chain" id="PRO_0000123206" description="Small ribosomal subunit protein uS11">
    <location>
        <begin position="1"/>
        <end position="129"/>
    </location>
</feature>
<comment type="function">
    <text evidence="1">Located on the platform of the 30S subunit, it bridges several disparate RNA helices of the 16S rRNA. Forms part of the Shine-Dalgarno cleft in the 70S ribosome.</text>
</comment>
<comment type="subunit">
    <text evidence="1">Part of the 30S ribosomal subunit. Interacts with proteins S7 and S18. Binds to IF-3.</text>
</comment>
<comment type="similarity">
    <text evidence="1">Belongs to the universal ribosomal protein uS11 family.</text>
</comment>
<sequence>MAKEATRVRRRERKNITSGVAHVNSSFNNTMITITDAQGNAIAWSSAGAKGFKGSRKSTPFAAQIAAEDCAKKAQEHGMKSLEVEVCGPGSGRESALRALQAAGFMITSIRDVTPIPHNGCRPRKKRRV</sequence>
<protein>
    <recommendedName>
        <fullName evidence="1">Small ribosomal subunit protein uS11</fullName>
    </recommendedName>
    <alternativeName>
        <fullName evidence="2">30S ribosomal protein S11</fullName>
    </alternativeName>
</protein>
<accession>Q925W7</accession>
<dbReference type="EMBL" id="AL591688">
    <property type="protein sequence ID" value="CAC45958.1"/>
    <property type="molecule type" value="Genomic_DNA"/>
</dbReference>
<dbReference type="EMBL" id="AF317474">
    <property type="protein sequence ID" value="AAL26900.1"/>
    <property type="molecule type" value="Genomic_DNA"/>
</dbReference>
<dbReference type="RefSeq" id="NP_385485.1">
    <property type="nucleotide sequence ID" value="NC_003047.1"/>
</dbReference>
<dbReference type="RefSeq" id="WP_003536496.1">
    <property type="nucleotide sequence ID" value="NC_003047.1"/>
</dbReference>
<dbReference type="SMR" id="Q925W7"/>
<dbReference type="EnsemblBacteria" id="CAC45958">
    <property type="protein sequence ID" value="CAC45958"/>
    <property type="gene ID" value="SMc01286"/>
</dbReference>
<dbReference type="GeneID" id="89575703"/>
<dbReference type="KEGG" id="sme:SMc01286"/>
<dbReference type="PATRIC" id="fig|266834.11.peg.2796"/>
<dbReference type="eggNOG" id="COG0100">
    <property type="taxonomic scope" value="Bacteria"/>
</dbReference>
<dbReference type="HOGENOM" id="CLU_072439_5_0_5"/>
<dbReference type="OrthoDB" id="9806415at2"/>
<dbReference type="PRO" id="PR:Q925W7"/>
<dbReference type="Proteomes" id="UP000001976">
    <property type="component" value="Chromosome"/>
</dbReference>
<dbReference type="GO" id="GO:1990904">
    <property type="term" value="C:ribonucleoprotein complex"/>
    <property type="evidence" value="ECO:0007669"/>
    <property type="project" value="UniProtKB-KW"/>
</dbReference>
<dbReference type="GO" id="GO:0005840">
    <property type="term" value="C:ribosome"/>
    <property type="evidence" value="ECO:0007669"/>
    <property type="project" value="UniProtKB-KW"/>
</dbReference>
<dbReference type="GO" id="GO:0019843">
    <property type="term" value="F:rRNA binding"/>
    <property type="evidence" value="ECO:0007669"/>
    <property type="project" value="UniProtKB-UniRule"/>
</dbReference>
<dbReference type="GO" id="GO:0003735">
    <property type="term" value="F:structural constituent of ribosome"/>
    <property type="evidence" value="ECO:0007669"/>
    <property type="project" value="InterPro"/>
</dbReference>
<dbReference type="GO" id="GO:0006412">
    <property type="term" value="P:translation"/>
    <property type="evidence" value="ECO:0007669"/>
    <property type="project" value="UniProtKB-UniRule"/>
</dbReference>
<dbReference type="FunFam" id="3.30.420.80:FF:000001">
    <property type="entry name" value="30S ribosomal protein S11"/>
    <property type="match status" value="1"/>
</dbReference>
<dbReference type="Gene3D" id="3.30.420.80">
    <property type="entry name" value="Ribosomal protein S11"/>
    <property type="match status" value="1"/>
</dbReference>
<dbReference type="HAMAP" id="MF_01310">
    <property type="entry name" value="Ribosomal_uS11"/>
    <property type="match status" value="1"/>
</dbReference>
<dbReference type="InterPro" id="IPR001971">
    <property type="entry name" value="Ribosomal_uS11"/>
</dbReference>
<dbReference type="InterPro" id="IPR019981">
    <property type="entry name" value="Ribosomal_uS11_bac-type"/>
</dbReference>
<dbReference type="InterPro" id="IPR018102">
    <property type="entry name" value="Ribosomal_uS11_CS"/>
</dbReference>
<dbReference type="InterPro" id="IPR036967">
    <property type="entry name" value="Ribosomal_uS11_sf"/>
</dbReference>
<dbReference type="NCBIfam" id="NF003698">
    <property type="entry name" value="PRK05309.1"/>
    <property type="match status" value="1"/>
</dbReference>
<dbReference type="NCBIfam" id="TIGR03632">
    <property type="entry name" value="uS11_bact"/>
    <property type="match status" value="1"/>
</dbReference>
<dbReference type="PANTHER" id="PTHR11759">
    <property type="entry name" value="40S RIBOSOMAL PROTEIN S14/30S RIBOSOMAL PROTEIN S11"/>
    <property type="match status" value="1"/>
</dbReference>
<dbReference type="Pfam" id="PF00411">
    <property type="entry name" value="Ribosomal_S11"/>
    <property type="match status" value="1"/>
</dbReference>
<dbReference type="PIRSF" id="PIRSF002131">
    <property type="entry name" value="Ribosomal_S11"/>
    <property type="match status" value="1"/>
</dbReference>
<dbReference type="SUPFAM" id="SSF53137">
    <property type="entry name" value="Translational machinery components"/>
    <property type="match status" value="1"/>
</dbReference>
<dbReference type="PROSITE" id="PS00054">
    <property type="entry name" value="RIBOSOMAL_S11"/>
    <property type="match status" value="1"/>
</dbReference>
<proteinExistence type="inferred from homology"/>
<name>RS11_RHIME</name>
<gene>
    <name evidence="1" type="primary">rpsK</name>
    <name type="ordered locus">R01379</name>
    <name type="ORF">SMc01286</name>
</gene>
<reference key="1">
    <citation type="journal article" date="2001" name="Proc. Natl. Acad. Sci. U.S.A.">
        <title>Analysis of the chromosome sequence of the legume symbiont Sinorhizobium meliloti strain 1021.</title>
        <authorList>
            <person name="Capela D."/>
            <person name="Barloy-Hubler F."/>
            <person name="Gouzy J."/>
            <person name="Bothe G."/>
            <person name="Ampe F."/>
            <person name="Batut J."/>
            <person name="Boistard P."/>
            <person name="Becker A."/>
            <person name="Boutry M."/>
            <person name="Cadieu E."/>
            <person name="Dreano S."/>
            <person name="Gloux S."/>
            <person name="Godrie T."/>
            <person name="Goffeau A."/>
            <person name="Kahn D."/>
            <person name="Kiss E."/>
            <person name="Lelaure V."/>
            <person name="Masuy D."/>
            <person name="Pohl T."/>
            <person name="Portetelle D."/>
            <person name="Puehler A."/>
            <person name="Purnelle B."/>
            <person name="Ramsperger U."/>
            <person name="Renard C."/>
            <person name="Thebault P."/>
            <person name="Vandenbol M."/>
            <person name="Weidner S."/>
            <person name="Galibert F."/>
        </authorList>
    </citation>
    <scope>NUCLEOTIDE SEQUENCE [LARGE SCALE GENOMIC DNA]</scope>
    <source>
        <strain>1021</strain>
    </source>
</reference>
<reference key="2">
    <citation type="journal article" date="2001" name="Science">
        <title>The composite genome of the legume symbiont Sinorhizobium meliloti.</title>
        <authorList>
            <person name="Galibert F."/>
            <person name="Finan T.M."/>
            <person name="Long S.R."/>
            <person name="Puehler A."/>
            <person name="Abola P."/>
            <person name="Ampe F."/>
            <person name="Barloy-Hubler F."/>
            <person name="Barnett M.J."/>
            <person name="Becker A."/>
            <person name="Boistard P."/>
            <person name="Bothe G."/>
            <person name="Boutry M."/>
            <person name="Bowser L."/>
            <person name="Buhrmester J."/>
            <person name="Cadieu E."/>
            <person name="Capela D."/>
            <person name="Chain P."/>
            <person name="Cowie A."/>
            <person name="Davis R.W."/>
            <person name="Dreano S."/>
            <person name="Federspiel N.A."/>
            <person name="Fisher R.F."/>
            <person name="Gloux S."/>
            <person name="Godrie T."/>
            <person name="Goffeau A."/>
            <person name="Golding B."/>
            <person name="Gouzy J."/>
            <person name="Gurjal M."/>
            <person name="Hernandez-Lucas I."/>
            <person name="Hong A."/>
            <person name="Huizar L."/>
            <person name="Hyman R.W."/>
            <person name="Jones T."/>
            <person name="Kahn D."/>
            <person name="Kahn M.L."/>
            <person name="Kalman S."/>
            <person name="Keating D.H."/>
            <person name="Kiss E."/>
            <person name="Komp C."/>
            <person name="Lelaure V."/>
            <person name="Masuy D."/>
            <person name="Palm C."/>
            <person name="Peck M.C."/>
            <person name="Pohl T.M."/>
            <person name="Portetelle D."/>
            <person name="Purnelle B."/>
            <person name="Ramsperger U."/>
            <person name="Surzycki R."/>
            <person name="Thebault P."/>
            <person name="Vandenbol M."/>
            <person name="Vorhoelter F.J."/>
            <person name="Weidner S."/>
            <person name="Wells D.H."/>
            <person name="Wong K."/>
            <person name="Yeh K.-C."/>
            <person name="Batut J."/>
        </authorList>
    </citation>
    <scope>NUCLEOTIDE SEQUENCE [LARGE SCALE GENOMIC DNA]</scope>
    <source>
        <strain>1021</strain>
    </source>
</reference>
<reference key="3">
    <citation type="journal article" date="2002" name="J. Bacteriol.">
        <title>The RNA polymerase alpha subunit from Sinorhizobium meliloti can assemble with RNA polymerase subunits from Escherichia coli and function in basal and activated transcription both in vivo and in vitro.</title>
        <authorList>
            <person name="Peck M.C."/>
            <person name="Gaal T."/>
            <person name="Fisher R.F."/>
            <person name="Gourse R.L."/>
            <person name="Long S.R."/>
        </authorList>
    </citation>
    <scope>NUCLEOTIDE SEQUENCE [GENOMIC DNA]</scope>
    <source>
        <strain>1021</strain>
    </source>
</reference>
<organism>
    <name type="scientific">Rhizobium meliloti (strain 1021)</name>
    <name type="common">Ensifer meliloti</name>
    <name type="synonym">Sinorhizobium meliloti</name>
    <dbReference type="NCBI Taxonomy" id="266834"/>
    <lineage>
        <taxon>Bacteria</taxon>
        <taxon>Pseudomonadati</taxon>
        <taxon>Pseudomonadota</taxon>
        <taxon>Alphaproteobacteria</taxon>
        <taxon>Hyphomicrobiales</taxon>
        <taxon>Rhizobiaceae</taxon>
        <taxon>Sinorhizobium/Ensifer group</taxon>
        <taxon>Sinorhizobium</taxon>
    </lineage>
</organism>